<accession>Q83P06</accession>
<accession>Q7UAJ2</accession>
<organism>
    <name type="scientific">Shigella flexneri</name>
    <dbReference type="NCBI Taxonomy" id="623"/>
    <lineage>
        <taxon>Bacteria</taxon>
        <taxon>Pseudomonadati</taxon>
        <taxon>Pseudomonadota</taxon>
        <taxon>Gammaproteobacteria</taxon>
        <taxon>Enterobacterales</taxon>
        <taxon>Enterobacteriaceae</taxon>
        <taxon>Shigella</taxon>
    </lineage>
</organism>
<feature type="initiator methionine" description="Removed" evidence="1">
    <location>
        <position position="1"/>
    </location>
</feature>
<feature type="chain" id="PRO_0000210961" description="Peptide chain release factor 3">
    <location>
        <begin position="2"/>
        <end position="529"/>
    </location>
</feature>
<feature type="domain" description="tr-type G">
    <location>
        <begin position="11"/>
        <end position="280"/>
    </location>
</feature>
<feature type="binding site" evidence="2">
    <location>
        <begin position="20"/>
        <end position="27"/>
    </location>
    <ligand>
        <name>GTP</name>
        <dbReference type="ChEBI" id="CHEBI:37565"/>
    </ligand>
</feature>
<feature type="binding site" evidence="2">
    <location>
        <begin position="88"/>
        <end position="92"/>
    </location>
    <ligand>
        <name>GTP</name>
        <dbReference type="ChEBI" id="CHEBI:37565"/>
    </ligand>
</feature>
<feature type="binding site" evidence="2">
    <location>
        <begin position="142"/>
        <end position="145"/>
    </location>
    <ligand>
        <name>GTP</name>
        <dbReference type="ChEBI" id="CHEBI:37565"/>
    </ligand>
</feature>
<dbReference type="EMBL" id="AE005674">
    <property type="protein sequence ID" value="AAN45821.2"/>
    <property type="molecule type" value="Genomic_DNA"/>
</dbReference>
<dbReference type="EMBL" id="AE014073">
    <property type="protein sequence ID" value="AAP19596.1"/>
    <property type="molecule type" value="Genomic_DNA"/>
</dbReference>
<dbReference type="RefSeq" id="NP_710114.2">
    <property type="nucleotide sequence ID" value="NC_004337.2"/>
</dbReference>
<dbReference type="RefSeq" id="WP_000175932.1">
    <property type="nucleotide sequence ID" value="NZ_WPGW01000013.1"/>
</dbReference>
<dbReference type="SMR" id="Q83P06"/>
<dbReference type="STRING" id="198214.SF4406"/>
<dbReference type="PaxDb" id="198214-SF4406"/>
<dbReference type="GeneID" id="1026848"/>
<dbReference type="KEGG" id="sfl:SF4406"/>
<dbReference type="KEGG" id="sfx:S4678"/>
<dbReference type="PATRIC" id="fig|198214.7.peg.5193"/>
<dbReference type="HOGENOM" id="CLU_002794_2_1_6"/>
<dbReference type="Proteomes" id="UP000001006">
    <property type="component" value="Chromosome"/>
</dbReference>
<dbReference type="Proteomes" id="UP000002673">
    <property type="component" value="Chromosome"/>
</dbReference>
<dbReference type="GO" id="GO:0005829">
    <property type="term" value="C:cytosol"/>
    <property type="evidence" value="ECO:0007669"/>
    <property type="project" value="TreeGrafter"/>
</dbReference>
<dbReference type="GO" id="GO:0005525">
    <property type="term" value="F:GTP binding"/>
    <property type="evidence" value="ECO:0007669"/>
    <property type="project" value="UniProtKB-UniRule"/>
</dbReference>
<dbReference type="GO" id="GO:0003924">
    <property type="term" value="F:GTPase activity"/>
    <property type="evidence" value="ECO:0007669"/>
    <property type="project" value="InterPro"/>
</dbReference>
<dbReference type="GO" id="GO:0097216">
    <property type="term" value="F:guanosine tetraphosphate binding"/>
    <property type="evidence" value="ECO:0007669"/>
    <property type="project" value="UniProtKB-ARBA"/>
</dbReference>
<dbReference type="GO" id="GO:0016150">
    <property type="term" value="F:translation release factor activity, codon nonspecific"/>
    <property type="evidence" value="ECO:0007669"/>
    <property type="project" value="TreeGrafter"/>
</dbReference>
<dbReference type="GO" id="GO:0016149">
    <property type="term" value="F:translation release factor activity, codon specific"/>
    <property type="evidence" value="ECO:0007669"/>
    <property type="project" value="UniProtKB-UniRule"/>
</dbReference>
<dbReference type="GO" id="GO:0006449">
    <property type="term" value="P:regulation of translational termination"/>
    <property type="evidence" value="ECO:0007669"/>
    <property type="project" value="UniProtKB-UniRule"/>
</dbReference>
<dbReference type="CDD" id="cd04169">
    <property type="entry name" value="RF3"/>
    <property type="match status" value="1"/>
</dbReference>
<dbReference type="CDD" id="cd03689">
    <property type="entry name" value="RF3_II"/>
    <property type="match status" value="1"/>
</dbReference>
<dbReference type="CDD" id="cd16259">
    <property type="entry name" value="RF3_III"/>
    <property type="match status" value="1"/>
</dbReference>
<dbReference type="FunFam" id="2.40.30.10:FF:000040">
    <property type="entry name" value="Peptide chain release factor 3"/>
    <property type="match status" value="1"/>
</dbReference>
<dbReference type="FunFam" id="3.30.70.3280:FF:000001">
    <property type="entry name" value="Peptide chain release factor 3"/>
    <property type="match status" value="1"/>
</dbReference>
<dbReference type="FunFam" id="3.40.50.300:FF:000184">
    <property type="entry name" value="Peptide chain release factor 3"/>
    <property type="match status" value="1"/>
</dbReference>
<dbReference type="FunFam" id="3.40.50.300:FF:000253">
    <property type="entry name" value="Peptide chain release factor 3"/>
    <property type="match status" value="1"/>
</dbReference>
<dbReference type="Gene3D" id="3.40.50.300">
    <property type="entry name" value="P-loop containing nucleotide triphosphate hydrolases"/>
    <property type="match status" value="3"/>
</dbReference>
<dbReference type="Gene3D" id="3.30.70.3280">
    <property type="entry name" value="Peptide chain release factor 3, domain III"/>
    <property type="match status" value="1"/>
</dbReference>
<dbReference type="HAMAP" id="MF_00072">
    <property type="entry name" value="Rel_fac_3"/>
    <property type="match status" value="1"/>
</dbReference>
<dbReference type="InterPro" id="IPR053905">
    <property type="entry name" value="EF-G-like_DII"/>
</dbReference>
<dbReference type="InterPro" id="IPR035647">
    <property type="entry name" value="EFG_III/V"/>
</dbReference>
<dbReference type="InterPro" id="IPR031157">
    <property type="entry name" value="G_TR_CS"/>
</dbReference>
<dbReference type="InterPro" id="IPR027417">
    <property type="entry name" value="P-loop_NTPase"/>
</dbReference>
<dbReference type="InterPro" id="IPR004548">
    <property type="entry name" value="PrfC"/>
</dbReference>
<dbReference type="InterPro" id="IPR032090">
    <property type="entry name" value="RF3_C"/>
</dbReference>
<dbReference type="InterPro" id="IPR038467">
    <property type="entry name" value="RF3_dom_3_sf"/>
</dbReference>
<dbReference type="InterPro" id="IPR041732">
    <property type="entry name" value="RF3_GTP-bd"/>
</dbReference>
<dbReference type="InterPro" id="IPR005225">
    <property type="entry name" value="Small_GTP-bd"/>
</dbReference>
<dbReference type="InterPro" id="IPR000795">
    <property type="entry name" value="T_Tr_GTP-bd_dom"/>
</dbReference>
<dbReference type="InterPro" id="IPR009000">
    <property type="entry name" value="Transl_B-barrel_sf"/>
</dbReference>
<dbReference type="NCBIfam" id="TIGR00503">
    <property type="entry name" value="prfC"/>
    <property type="match status" value="1"/>
</dbReference>
<dbReference type="NCBIfam" id="NF001964">
    <property type="entry name" value="PRK00741.1"/>
    <property type="match status" value="1"/>
</dbReference>
<dbReference type="NCBIfam" id="TIGR00231">
    <property type="entry name" value="small_GTP"/>
    <property type="match status" value="1"/>
</dbReference>
<dbReference type="PANTHER" id="PTHR43556">
    <property type="entry name" value="PEPTIDE CHAIN RELEASE FACTOR RF3"/>
    <property type="match status" value="1"/>
</dbReference>
<dbReference type="PANTHER" id="PTHR43556:SF2">
    <property type="entry name" value="PEPTIDE CHAIN RELEASE FACTOR RF3"/>
    <property type="match status" value="1"/>
</dbReference>
<dbReference type="Pfam" id="PF22042">
    <property type="entry name" value="EF-G_D2"/>
    <property type="match status" value="1"/>
</dbReference>
<dbReference type="Pfam" id="PF00009">
    <property type="entry name" value="GTP_EFTU"/>
    <property type="match status" value="1"/>
</dbReference>
<dbReference type="Pfam" id="PF16658">
    <property type="entry name" value="RF3_C"/>
    <property type="match status" value="1"/>
</dbReference>
<dbReference type="PRINTS" id="PR00315">
    <property type="entry name" value="ELONGATNFCT"/>
</dbReference>
<dbReference type="SUPFAM" id="SSF54980">
    <property type="entry name" value="EF-G C-terminal domain-like"/>
    <property type="match status" value="1"/>
</dbReference>
<dbReference type="SUPFAM" id="SSF52540">
    <property type="entry name" value="P-loop containing nucleoside triphosphate hydrolases"/>
    <property type="match status" value="1"/>
</dbReference>
<dbReference type="SUPFAM" id="SSF50447">
    <property type="entry name" value="Translation proteins"/>
    <property type="match status" value="1"/>
</dbReference>
<dbReference type="PROSITE" id="PS00301">
    <property type="entry name" value="G_TR_1"/>
    <property type="match status" value="1"/>
</dbReference>
<dbReference type="PROSITE" id="PS51722">
    <property type="entry name" value="G_TR_2"/>
    <property type="match status" value="1"/>
</dbReference>
<protein>
    <recommendedName>
        <fullName evidence="2">Peptide chain release factor 3</fullName>
        <shortName evidence="2">RF-3</shortName>
    </recommendedName>
</protein>
<reference key="1">
    <citation type="journal article" date="2002" name="Nucleic Acids Res.">
        <title>Genome sequence of Shigella flexneri 2a: insights into pathogenicity through comparison with genomes of Escherichia coli K12 and O157.</title>
        <authorList>
            <person name="Jin Q."/>
            <person name="Yuan Z."/>
            <person name="Xu J."/>
            <person name="Wang Y."/>
            <person name="Shen Y."/>
            <person name="Lu W."/>
            <person name="Wang J."/>
            <person name="Liu H."/>
            <person name="Yang J."/>
            <person name="Yang F."/>
            <person name="Zhang X."/>
            <person name="Zhang J."/>
            <person name="Yang G."/>
            <person name="Wu H."/>
            <person name="Qu D."/>
            <person name="Dong J."/>
            <person name="Sun L."/>
            <person name="Xue Y."/>
            <person name="Zhao A."/>
            <person name="Gao Y."/>
            <person name="Zhu J."/>
            <person name="Kan B."/>
            <person name="Ding K."/>
            <person name="Chen S."/>
            <person name="Cheng H."/>
            <person name="Yao Z."/>
            <person name="He B."/>
            <person name="Chen R."/>
            <person name="Ma D."/>
            <person name="Qiang B."/>
            <person name="Wen Y."/>
            <person name="Hou Y."/>
            <person name="Yu J."/>
        </authorList>
    </citation>
    <scope>NUCLEOTIDE SEQUENCE [LARGE SCALE GENOMIC DNA]</scope>
    <source>
        <strain>301 / Serotype 2a</strain>
    </source>
</reference>
<reference key="2">
    <citation type="journal article" date="2003" name="Infect. Immun.">
        <title>Complete genome sequence and comparative genomics of Shigella flexneri serotype 2a strain 2457T.</title>
        <authorList>
            <person name="Wei J."/>
            <person name="Goldberg M.B."/>
            <person name="Burland V."/>
            <person name="Venkatesan M.M."/>
            <person name="Deng W."/>
            <person name="Fournier G."/>
            <person name="Mayhew G.F."/>
            <person name="Plunkett G. III"/>
            <person name="Rose D.J."/>
            <person name="Darling A."/>
            <person name="Mau B."/>
            <person name="Perna N.T."/>
            <person name="Payne S.M."/>
            <person name="Runyen-Janecky L.J."/>
            <person name="Zhou S."/>
            <person name="Schwartz D.C."/>
            <person name="Blattner F.R."/>
        </authorList>
    </citation>
    <scope>NUCLEOTIDE SEQUENCE [LARGE SCALE GENOMIC DNA]</scope>
    <source>
        <strain>ATCC 700930 / 2457T / Serotype 2a</strain>
    </source>
</reference>
<comment type="function">
    <text evidence="2">Increases the formation of ribosomal termination complexes and stimulates activities of RF-1 and RF-2. It binds guanine nucleotides and has strong preference for UGA stop codons. It may interact directly with the ribosome. The stimulation of RF-1 and RF-2 is significantly reduced by GTP and GDP, but not by GMP.</text>
</comment>
<comment type="subcellular location">
    <subcellularLocation>
        <location evidence="2">Cytoplasm</location>
    </subcellularLocation>
</comment>
<comment type="similarity">
    <text evidence="2">Belongs to the TRAFAC class translation factor GTPase superfamily. Classic translation factor GTPase family. PrfC subfamily.</text>
</comment>
<gene>
    <name evidence="2" type="primary">prfC</name>
    <name type="ordered locus">SF4406</name>
    <name type="ordered locus">S4678</name>
</gene>
<sequence>MTLSPYLKEVAKRRTFAIISHPDAGKTTITEKVLLFGQAIQTAGTVKGRGSNQHAKSDWMEMEKQRGISITTSVMQFPYHDCLVNLLDTPGHEDFSEDTYRTLTAVDCCLMVIDAAKGVEDRTRKLMEVTRLRDTPILTFMNKLDRDIRDPMELLDEVENELKIGCAPITWPIGCGKLFKGVYHLYKDETYLYQSGKGHTIQEVRIVKGLNNPDLDAAVGEDLAQQLRDELELVKGASNEFDKELFLAGEITPVFFGTALGNFGVDHMLNGLVEWAPAPMPRQTDTRTVEASEDKFTGFVFKIQANMDPKHRDRVAFMRVVSGKYEKGMKLRQVRTAKDVVISDALTFMAGDRSHVEEAYPGDILGLHNHGTIQIGDTFTQGEMMKFTGIPNFAPELFRRIRLKDPLKQKQLLKGLVQLSEEGAVQVFRPISNNDLIVGAVGVLQFDVVVARLKSEYNVEAVYESVNVATARWVECADAKKFEEFKRKNESQLALDGGDNLAYIATSMVNLRLAQERYPDVQFHQTREH</sequence>
<proteinExistence type="inferred from homology"/>
<keyword id="KW-0963">Cytoplasm</keyword>
<keyword id="KW-0342">GTP-binding</keyword>
<keyword id="KW-0547">Nucleotide-binding</keyword>
<keyword id="KW-0648">Protein biosynthesis</keyword>
<keyword id="KW-1185">Reference proteome</keyword>
<name>RF3_SHIFL</name>
<evidence type="ECO:0000250" key="1"/>
<evidence type="ECO:0000255" key="2">
    <source>
        <dbReference type="HAMAP-Rule" id="MF_00072"/>
    </source>
</evidence>